<organism>
    <name type="scientific">Lachancea thermotolerans (strain ATCC 56472 / CBS 6340 / NRRL Y-8284)</name>
    <name type="common">Yeast</name>
    <name type="synonym">Kluyveromyces thermotolerans</name>
    <dbReference type="NCBI Taxonomy" id="559295"/>
    <lineage>
        <taxon>Eukaryota</taxon>
        <taxon>Fungi</taxon>
        <taxon>Dikarya</taxon>
        <taxon>Ascomycota</taxon>
        <taxon>Saccharomycotina</taxon>
        <taxon>Saccharomycetes</taxon>
        <taxon>Saccharomycetales</taxon>
        <taxon>Saccharomycetaceae</taxon>
        <taxon>Lachancea</taxon>
    </lineage>
</organism>
<protein>
    <recommendedName>
        <fullName>Nuclear rim protein 1</fullName>
    </recommendedName>
</protein>
<evidence type="ECO:0000250" key="1"/>
<evidence type="ECO:0000255" key="2"/>
<evidence type="ECO:0000256" key="3">
    <source>
        <dbReference type="SAM" id="MobiDB-lite"/>
    </source>
</evidence>
<evidence type="ECO:0000305" key="4"/>
<accession>C5E3S7</accession>
<dbReference type="EMBL" id="CU928180">
    <property type="protein sequence ID" value="CAR30688.1"/>
    <property type="molecule type" value="Genomic_DNA"/>
</dbReference>
<dbReference type="RefSeq" id="XP_002556550.1">
    <property type="nucleotide sequence ID" value="XM_002556504.1"/>
</dbReference>
<dbReference type="FunCoup" id="C5E3S7">
    <property type="interactions" value="40"/>
</dbReference>
<dbReference type="STRING" id="559295.C5E3S7"/>
<dbReference type="GeneID" id="8294916"/>
<dbReference type="KEGG" id="lth:KLTH0H15994g"/>
<dbReference type="eggNOG" id="ENOG502S7S0">
    <property type="taxonomic scope" value="Eukaryota"/>
</dbReference>
<dbReference type="HOGENOM" id="CLU_033252_0_0_1"/>
<dbReference type="InParanoid" id="C5E3S7"/>
<dbReference type="OMA" id="TRSHIFQ"/>
<dbReference type="OrthoDB" id="3363151at2759"/>
<dbReference type="Proteomes" id="UP000002036">
    <property type="component" value="Chromosome H"/>
</dbReference>
<dbReference type="GO" id="GO:0031965">
    <property type="term" value="C:nuclear membrane"/>
    <property type="evidence" value="ECO:0007669"/>
    <property type="project" value="UniProtKB-SubCell"/>
</dbReference>
<dbReference type="GO" id="GO:0043007">
    <property type="term" value="P:maintenance of rDNA"/>
    <property type="evidence" value="ECO:0007669"/>
    <property type="project" value="TreeGrafter"/>
</dbReference>
<dbReference type="GO" id="GO:0007096">
    <property type="term" value="P:regulation of exit from mitosis"/>
    <property type="evidence" value="ECO:0007669"/>
    <property type="project" value="TreeGrafter"/>
</dbReference>
<dbReference type="InterPro" id="IPR018819">
    <property type="entry name" value="Nur1/Mug154"/>
</dbReference>
<dbReference type="PANTHER" id="PTHR28293">
    <property type="entry name" value="NUCLEAR RIM PROTEIN 1"/>
    <property type="match status" value="1"/>
</dbReference>
<dbReference type="PANTHER" id="PTHR28293:SF1">
    <property type="entry name" value="NUCLEAR RIM PROTEIN 1"/>
    <property type="match status" value="1"/>
</dbReference>
<dbReference type="Pfam" id="PF10332">
    <property type="entry name" value="DUF2418"/>
    <property type="match status" value="1"/>
</dbReference>
<proteinExistence type="inferred from homology"/>
<comment type="function">
    <text evidence="1">Member of a perinuclear network that controls recombination at multiple loci to maintain genome stability. Required for rDNA repeat stability (By similarity).</text>
</comment>
<comment type="subcellular location">
    <subcellularLocation>
        <location evidence="1">Nucleus membrane</location>
        <topology evidence="1">Multi-pass membrane protein</topology>
    </subcellularLocation>
</comment>
<comment type="similarity">
    <text evidence="4">Belongs to the NUR1 family.</text>
</comment>
<sequence length="592" mass="67038">MTFRLSRFESPLIEDDGESRASLLGYSPENELYTDVDENRESRFRRFMSFISSSPYDMFLAINEHVESIDWDSKASTIAGPLGNFFTCSLYTARLLQDSLIRPNQQKLDKKRDSFDLSRSEILRKFEYLSQVPKSGVVVTHLNWYWKFLTFLNVALQITVGFLILINLFVAYKFLIGHFQVYSLFYTKTSPRSKNVTKRSLSDLSFKSLEEVTNSSLWTMIRYMFVRKRLIIKDAPKGKYYYQLRKWTPGKFYTALFSAFSPISVIFLLVTEVSFKTALAVIGHQYILFLVLFKRYESRLDDEACLAKAHFEEINEKVIKPKTTIKTQDAMVDATTYGGGAAFFPSFTTTRSHIFQTHAVTGDIITERYNPETRNFEDVENTGRAKNYISQIQGVSHGQQVVSRSKAMNGATARPQFFSRQPSPSKIGTPSIILNYRTSPFSAPTTPTLKPVNGVQNGQSIFRNSPDPSKANSLNCDTSHLSRNNTLSRLRRNSVSPTKSGNYCSASGMRAIHKSNFGADSSVSYSMEAPSNELPFEEVARRGRHPFEITASRDLPAGRSSAVSSRHSSISPFKGNTSFAGRESLDSRPPFR</sequence>
<feature type="chain" id="PRO_0000409030" description="Nuclear rim protein 1">
    <location>
        <begin position="1"/>
        <end position="592"/>
    </location>
</feature>
<feature type="transmembrane region" description="Helical" evidence="2">
    <location>
        <begin position="151"/>
        <end position="171"/>
    </location>
</feature>
<feature type="transmembrane region" description="Helical" evidence="2">
    <location>
        <begin position="255"/>
        <end position="275"/>
    </location>
</feature>
<feature type="region of interest" description="Disordered" evidence="3">
    <location>
        <begin position="547"/>
        <end position="592"/>
    </location>
</feature>
<feature type="compositionally biased region" description="Low complexity" evidence="3">
    <location>
        <begin position="560"/>
        <end position="571"/>
    </location>
</feature>
<gene>
    <name type="primary">NUR1</name>
    <name type="ordered locus">KLTH0H15994g</name>
</gene>
<reference key="1">
    <citation type="journal article" date="2009" name="Genome Res.">
        <title>Comparative genomics of protoploid Saccharomycetaceae.</title>
        <authorList>
            <consortium name="The Genolevures Consortium"/>
            <person name="Souciet J.-L."/>
            <person name="Dujon B."/>
            <person name="Gaillardin C."/>
            <person name="Johnston M."/>
            <person name="Baret P.V."/>
            <person name="Cliften P."/>
            <person name="Sherman D.J."/>
            <person name="Weissenbach J."/>
            <person name="Westhof E."/>
            <person name="Wincker P."/>
            <person name="Jubin C."/>
            <person name="Poulain J."/>
            <person name="Barbe V."/>
            <person name="Segurens B."/>
            <person name="Artiguenave F."/>
            <person name="Anthouard V."/>
            <person name="Vacherie B."/>
            <person name="Val M.-E."/>
            <person name="Fulton R.S."/>
            <person name="Minx P."/>
            <person name="Wilson R."/>
            <person name="Durrens P."/>
            <person name="Jean G."/>
            <person name="Marck C."/>
            <person name="Martin T."/>
            <person name="Nikolski M."/>
            <person name="Rolland T."/>
            <person name="Seret M.-L."/>
            <person name="Casaregola S."/>
            <person name="Despons L."/>
            <person name="Fairhead C."/>
            <person name="Fischer G."/>
            <person name="Lafontaine I."/>
            <person name="Leh V."/>
            <person name="Lemaire M."/>
            <person name="de Montigny J."/>
            <person name="Neuveglise C."/>
            <person name="Thierry A."/>
            <person name="Blanc-Lenfle I."/>
            <person name="Bleykasten C."/>
            <person name="Diffels J."/>
            <person name="Fritsch E."/>
            <person name="Frangeul L."/>
            <person name="Goeffon A."/>
            <person name="Jauniaux N."/>
            <person name="Kachouri-Lafond R."/>
            <person name="Payen C."/>
            <person name="Potier S."/>
            <person name="Pribylova L."/>
            <person name="Ozanne C."/>
            <person name="Richard G.-F."/>
            <person name="Sacerdot C."/>
            <person name="Straub M.-L."/>
            <person name="Talla E."/>
        </authorList>
    </citation>
    <scope>NUCLEOTIDE SEQUENCE [LARGE SCALE GENOMIC DNA]</scope>
    <source>
        <strain>ATCC 56472 / CBS 6340 / NRRL Y-8284</strain>
    </source>
</reference>
<name>NUR1_LACTC</name>
<keyword id="KW-0472">Membrane</keyword>
<keyword id="KW-0539">Nucleus</keyword>
<keyword id="KW-1185">Reference proteome</keyword>
<keyword id="KW-0812">Transmembrane</keyword>
<keyword id="KW-1133">Transmembrane helix</keyword>